<accession>Q8T133</accession>
<accession>Q551S5</accession>
<accession>Q9GSH4</accession>
<comment type="function">
    <text evidence="3">Required for efficient chemotaxis.</text>
</comment>
<comment type="subcellular location">
    <subcellularLocation>
        <location evidence="3">Mitochondrion</location>
    </subcellularLocation>
</comment>
<comment type="disruption phenotype">
    <text evidence="3">Mutants have no defect in cAMP signaling or motility, but are unable to respond to a spatial gradient with directed movement.</text>
</comment>
<organism>
    <name type="scientific">Dictyostelium discoideum</name>
    <name type="common">Social amoeba</name>
    <dbReference type="NCBI Taxonomy" id="44689"/>
    <lineage>
        <taxon>Eukaryota</taxon>
        <taxon>Amoebozoa</taxon>
        <taxon>Evosea</taxon>
        <taxon>Eumycetozoa</taxon>
        <taxon>Dictyostelia</taxon>
        <taxon>Dictyosteliales</taxon>
        <taxon>Dictyosteliaceae</taxon>
        <taxon>Dictyostelium</taxon>
    </lineage>
</organism>
<evidence type="ECO:0000255" key="1"/>
<evidence type="ECO:0000256" key="2">
    <source>
        <dbReference type="SAM" id="MobiDB-lite"/>
    </source>
</evidence>
<evidence type="ECO:0000269" key="3">
    <source>
    </source>
</evidence>
<evidence type="ECO:0000305" key="4"/>
<reference key="1">
    <citation type="journal article" date="2001" name="J. Cell Biol.">
        <title>Tortoise, a novel mitochondrial protein, is required for directional responses of Dictyostelium in chemotactic gradients.</title>
        <authorList>
            <person name="van Es S."/>
            <person name="Wessels D."/>
            <person name="Soll D.R."/>
            <person name="Borleis J."/>
            <person name="Devreotes P.N."/>
        </authorList>
    </citation>
    <scope>NUCLEOTIDE SEQUENCE [MRNA]</scope>
    <scope>FUNCTION</scope>
    <scope>SUBCELLULAR LOCATION</scope>
    <scope>DISRUPTION PHENOTYPE</scope>
</reference>
<reference key="2">
    <citation type="journal article" date="2002" name="Nature">
        <title>Sequence and analysis of chromosome 2 of Dictyostelium discoideum.</title>
        <authorList>
            <person name="Gloeckner G."/>
            <person name="Eichinger L."/>
            <person name="Szafranski K."/>
            <person name="Pachebat J.A."/>
            <person name="Bankier A.T."/>
            <person name="Dear P.H."/>
            <person name="Lehmann R."/>
            <person name="Baumgart C."/>
            <person name="Parra G."/>
            <person name="Abril J.F."/>
            <person name="Guigo R."/>
            <person name="Kumpf K."/>
            <person name="Tunggal B."/>
            <person name="Cox E.C."/>
            <person name="Quail M.A."/>
            <person name="Platzer M."/>
            <person name="Rosenthal A."/>
            <person name="Noegel A.A."/>
        </authorList>
    </citation>
    <scope>NUCLEOTIDE SEQUENCE [LARGE SCALE GENOMIC DNA]</scope>
    <source>
        <strain>AX4</strain>
    </source>
</reference>
<reference key="3">
    <citation type="journal article" date="2005" name="Nature">
        <title>The genome of the social amoeba Dictyostelium discoideum.</title>
        <authorList>
            <person name="Eichinger L."/>
            <person name="Pachebat J.A."/>
            <person name="Gloeckner G."/>
            <person name="Rajandream M.A."/>
            <person name="Sucgang R."/>
            <person name="Berriman M."/>
            <person name="Song J."/>
            <person name="Olsen R."/>
            <person name="Szafranski K."/>
            <person name="Xu Q."/>
            <person name="Tunggal B."/>
            <person name="Kummerfeld S."/>
            <person name="Madera M."/>
            <person name="Konfortov B.A."/>
            <person name="Rivero F."/>
            <person name="Bankier A.T."/>
            <person name="Lehmann R."/>
            <person name="Hamlin N."/>
            <person name="Davies R."/>
            <person name="Gaudet P."/>
            <person name="Fey P."/>
            <person name="Pilcher K."/>
            <person name="Chen G."/>
            <person name="Saunders D."/>
            <person name="Sodergren E.J."/>
            <person name="Davis P."/>
            <person name="Kerhornou A."/>
            <person name="Nie X."/>
            <person name="Hall N."/>
            <person name="Anjard C."/>
            <person name="Hemphill L."/>
            <person name="Bason N."/>
            <person name="Farbrother P."/>
            <person name="Desany B."/>
            <person name="Just E."/>
            <person name="Morio T."/>
            <person name="Rost R."/>
            <person name="Churcher C.M."/>
            <person name="Cooper J."/>
            <person name="Haydock S."/>
            <person name="van Driessche N."/>
            <person name="Cronin A."/>
            <person name="Goodhead I."/>
            <person name="Muzny D.M."/>
            <person name="Mourier T."/>
            <person name="Pain A."/>
            <person name="Lu M."/>
            <person name="Harper D."/>
            <person name="Lindsay R."/>
            <person name="Hauser H."/>
            <person name="James K.D."/>
            <person name="Quiles M."/>
            <person name="Madan Babu M."/>
            <person name="Saito T."/>
            <person name="Buchrieser C."/>
            <person name="Wardroper A."/>
            <person name="Felder M."/>
            <person name="Thangavelu M."/>
            <person name="Johnson D."/>
            <person name="Knights A."/>
            <person name="Loulseged H."/>
            <person name="Mungall K.L."/>
            <person name="Oliver K."/>
            <person name="Price C."/>
            <person name="Quail M.A."/>
            <person name="Urushihara H."/>
            <person name="Hernandez J."/>
            <person name="Rabbinowitsch E."/>
            <person name="Steffen D."/>
            <person name="Sanders M."/>
            <person name="Ma J."/>
            <person name="Kohara Y."/>
            <person name="Sharp S."/>
            <person name="Simmonds M.N."/>
            <person name="Spiegler S."/>
            <person name="Tivey A."/>
            <person name="Sugano S."/>
            <person name="White B."/>
            <person name="Walker D."/>
            <person name="Woodward J.R."/>
            <person name="Winckler T."/>
            <person name="Tanaka Y."/>
            <person name="Shaulsky G."/>
            <person name="Schleicher M."/>
            <person name="Weinstock G.M."/>
            <person name="Rosenthal A."/>
            <person name="Cox E.C."/>
            <person name="Chisholm R.L."/>
            <person name="Gibbs R.A."/>
            <person name="Loomis W.F."/>
            <person name="Platzer M."/>
            <person name="Kay R.R."/>
            <person name="Williams J.G."/>
            <person name="Dear P.H."/>
            <person name="Noegel A.A."/>
            <person name="Barrell B.G."/>
            <person name="Kuspa A."/>
        </authorList>
    </citation>
    <scope>NUCLEOTIDE SEQUENCE [LARGE SCALE GENOMIC DNA]</scope>
    <source>
        <strain>AX4</strain>
    </source>
</reference>
<feature type="chain" id="PRO_0000327929" description="Protein tortoise">
    <location>
        <begin position="1"/>
        <end position="808"/>
    </location>
</feature>
<feature type="region of interest" description="Disordered" evidence="2">
    <location>
        <begin position="152"/>
        <end position="171"/>
    </location>
</feature>
<feature type="coiled-coil region" evidence="1">
    <location>
        <begin position="43"/>
        <end position="78"/>
    </location>
</feature>
<feature type="coiled-coil region" evidence="1">
    <location>
        <begin position="694"/>
        <end position="733"/>
    </location>
</feature>
<feature type="sequence conflict" description="In Ref. 1; AAG30251." evidence="4" ref="1">
    <original>N</original>
    <variation>D</variation>
    <location>
        <position position="52"/>
    </location>
</feature>
<sequence>MNKTIIINNVSKYIKFKNYYSSSSTILKKKTSEIYKIKGLDIKDRKELYSLNNDSIKKKLNQLKDETNQLLKERGEELMKDLSKTLNLTSDNLKYNITKSPFTLRAYLLAANQGISFYHHELRKQINPTDDYERQKRKDLVYKLQSQEIDSLTSGGANKKKSPFLEDNNNKKSMSIEREMEIIREQQQEQQHFDQQMSNSTKWEMSQLEIQPRIDTFRQDELFVSFNPYESMSTNSQSYQLVSRLSKFVWNKELTNWEMFSSSKLNQLIPQLQLHILDKINLNNDNDNDNSIIINQFLESIKFISNEINSTDLNIFKTLNSSNNNNNSSENIIEVENGGDFKKIINNSIVDSLIYMKGHHFRITSDPFILFFQQLKENQDYFTSNEDYKQFLEKLLDTLLFETIEFDPTSTTTINGNRQFEYKLKLDLLQREAFRQFKVYQVFNTSPDAKRHEESDLRKLAHLCKTLQKRSTSDFIQESKKYLSPQILSNGLLNSNKLLVATSSSNELNQSKTSISISQLTDGLHSCIPATMSLLEFSIKNSSKDNILFDTFDGKLKNINSLDDLITKFANSKYIYLRESLSQRFSMFIQSSNNTTDNNTTTDTNDNDIIIGLNNPIYKLLIDLEDKVLELSQNNFEENPIENWIGCLSIELGDEDDNIEYKDTDQFNVIASQNFNLVRINNQMLAQLHKTFSEDLDFQIEELELMIKNKKILEREIKAHNEKISKIIKDSRDSTTPTFYFIGIQDDQVYTLEIPNEWEPVWNLLKSYPNGLLLKDFIDKQTFVTKEAFLSTLTDLNKYGVVGLFPKN</sequence>
<keyword id="KW-0145">Chemotaxis</keyword>
<keyword id="KW-0175">Coiled coil</keyword>
<keyword id="KW-0496">Mitochondrion</keyword>
<keyword id="KW-1185">Reference proteome</keyword>
<proteinExistence type="evidence at transcript level"/>
<protein>
    <recommendedName>
        <fullName>Protein tortoise</fullName>
    </recommendedName>
</protein>
<gene>
    <name type="primary">torA</name>
    <name type="ORF">DDB_G0276353</name>
</gene>
<name>TORA_DICDI</name>
<dbReference type="EMBL" id="AF303221">
    <property type="protein sequence ID" value="AAG30251.1"/>
    <property type="molecule type" value="mRNA"/>
</dbReference>
<dbReference type="EMBL" id="AAFI02000014">
    <property type="protein sequence ID" value="EAL69257.1"/>
    <property type="molecule type" value="Genomic_DNA"/>
</dbReference>
<dbReference type="RefSeq" id="XP_643175.1">
    <property type="nucleotide sequence ID" value="XM_638083.1"/>
</dbReference>
<dbReference type="SMR" id="Q8T133"/>
<dbReference type="FunCoup" id="Q8T133">
    <property type="interactions" value="53"/>
</dbReference>
<dbReference type="STRING" id="44689.Q8T133"/>
<dbReference type="PaxDb" id="44689-DDB0185067"/>
<dbReference type="EnsemblProtists" id="EAL69257">
    <property type="protein sequence ID" value="EAL69257"/>
    <property type="gene ID" value="DDB_G0276353"/>
</dbReference>
<dbReference type="GeneID" id="8620447"/>
<dbReference type="KEGG" id="ddi:DDB_G0276353"/>
<dbReference type="dictyBase" id="DDB_G0276353">
    <property type="gene designation" value="torA"/>
</dbReference>
<dbReference type="VEuPathDB" id="AmoebaDB:DDB_G0276353"/>
<dbReference type="eggNOG" id="ENOG502RGRR">
    <property type="taxonomic scope" value="Eukaryota"/>
</dbReference>
<dbReference type="HOGENOM" id="CLU_348985_0_0_1"/>
<dbReference type="InParanoid" id="Q8T133"/>
<dbReference type="OMA" id="YFIGIQD"/>
<dbReference type="PRO" id="PR:Q8T133"/>
<dbReference type="Proteomes" id="UP000002195">
    <property type="component" value="Chromosome 2"/>
</dbReference>
<dbReference type="GO" id="GO:0005739">
    <property type="term" value="C:mitochondrion"/>
    <property type="evidence" value="ECO:0000314"/>
    <property type="project" value="dictyBase"/>
</dbReference>
<dbReference type="GO" id="GO:0140582">
    <property type="term" value="P:adenylate cyclase-activating G protein-coupled cAMP receptor signaling pathway"/>
    <property type="evidence" value="ECO:0000315"/>
    <property type="project" value="dictyBase"/>
</dbReference>
<dbReference type="GO" id="GO:0031152">
    <property type="term" value="P:aggregation involved in sorocarp development"/>
    <property type="evidence" value="ECO:0000315"/>
    <property type="project" value="dictyBase"/>
</dbReference>
<dbReference type="GO" id="GO:0016477">
    <property type="term" value="P:cell migration"/>
    <property type="evidence" value="ECO:0000315"/>
    <property type="project" value="dictyBase"/>
</dbReference>
<dbReference type="GO" id="GO:0006935">
    <property type="term" value="P:chemotaxis"/>
    <property type="evidence" value="ECO:0007669"/>
    <property type="project" value="UniProtKB-KW"/>
</dbReference>